<dbReference type="EC" id="2.1.1.199" evidence="1"/>
<dbReference type="EMBL" id="CP000526">
    <property type="protein sequence ID" value="ABM49838.1"/>
    <property type="molecule type" value="Genomic_DNA"/>
</dbReference>
<dbReference type="RefSeq" id="WP_004194427.1">
    <property type="nucleotide sequence ID" value="NC_008785.1"/>
</dbReference>
<dbReference type="SMR" id="A1V0S6"/>
<dbReference type="GeneID" id="93061635"/>
<dbReference type="KEGG" id="bmv:BMASAVP1_A0480"/>
<dbReference type="HOGENOM" id="CLU_038422_2_0_4"/>
<dbReference type="GO" id="GO:0005737">
    <property type="term" value="C:cytoplasm"/>
    <property type="evidence" value="ECO:0007669"/>
    <property type="project" value="UniProtKB-SubCell"/>
</dbReference>
<dbReference type="GO" id="GO:0071424">
    <property type="term" value="F:rRNA (cytosine-N4-)-methyltransferase activity"/>
    <property type="evidence" value="ECO:0007669"/>
    <property type="project" value="UniProtKB-UniRule"/>
</dbReference>
<dbReference type="GO" id="GO:0070475">
    <property type="term" value="P:rRNA base methylation"/>
    <property type="evidence" value="ECO:0007669"/>
    <property type="project" value="UniProtKB-UniRule"/>
</dbReference>
<dbReference type="Gene3D" id="1.10.150.170">
    <property type="entry name" value="Putative methyltransferase TM0872, insert domain"/>
    <property type="match status" value="1"/>
</dbReference>
<dbReference type="Gene3D" id="3.40.50.150">
    <property type="entry name" value="Vaccinia Virus protein VP39"/>
    <property type="match status" value="1"/>
</dbReference>
<dbReference type="HAMAP" id="MF_01007">
    <property type="entry name" value="16SrRNA_methyltr_H"/>
    <property type="match status" value="1"/>
</dbReference>
<dbReference type="InterPro" id="IPR002903">
    <property type="entry name" value="RsmH"/>
</dbReference>
<dbReference type="InterPro" id="IPR023397">
    <property type="entry name" value="SAM-dep_MeTrfase_MraW_recog"/>
</dbReference>
<dbReference type="InterPro" id="IPR029063">
    <property type="entry name" value="SAM-dependent_MTases_sf"/>
</dbReference>
<dbReference type="NCBIfam" id="TIGR00006">
    <property type="entry name" value="16S rRNA (cytosine(1402)-N(4))-methyltransferase RsmH"/>
    <property type="match status" value="1"/>
</dbReference>
<dbReference type="PANTHER" id="PTHR11265:SF0">
    <property type="entry name" value="12S RRNA N4-METHYLCYTIDINE METHYLTRANSFERASE"/>
    <property type="match status" value="1"/>
</dbReference>
<dbReference type="PANTHER" id="PTHR11265">
    <property type="entry name" value="S-ADENOSYL-METHYLTRANSFERASE MRAW"/>
    <property type="match status" value="1"/>
</dbReference>
<dbReference type="Pfam" id="PF01795">
    <property type="entry name" value="Methyltransf_5"/>
    <property type="match status" value="1"/>
</dbReference>
<dbReference type="PIRSF" id="PIRSF004486">
    <property type="entry name" value="MraW"/>
    <property type="match status" value="1"/>
</dbReference>
<dbReference type="SUPFAM" id="SSF81799">
    <property type="entry name" value="Putative methyltransferase TM0872, insert domain"/>
    <property type="match status" value="1"/>
</dbReference>
<dbReference type="SUPFAM" id="SSF53335">
    <property type="entry name" value="S-adenosyl-L-methionine-dependent methyltransferases"/>
    <property type="match status" value="1"/>
</dbReference>
<comment type="function">
    <text evidence="1">Specifically methylates the N4 position of cytidine in position 1402 (C1402) of 16S rRNA.</text>
</comment>
<comment type="catalytic activity">
    <reaction evidence="1">
        <text>cytidine(1402) in 16S rRNA + S-adenosyl-L-methionine = N(4)-methylcytidine(1402) in 16S rRNA + S-adenosyl-L-homocysteine + H(+)</text>
        <dbReference type="Rhea" id="RHEA:42928"/>
        <dbReference type="Rhea" id="RHEA-COMP:10286"/>
        <dbReference type="Rhea" id="RHEA-COMP:10287"/>
        <dbReference type="ChEBI" id="CHEBI:15378"/>
        <dbReference type="ChEBI" id="CHEBI:57856"/>
        <dbReference type="ChEBI" id="CHEBI:59789"/>
        <dbReference type="ChEBI" id="CHEBI:74506"/>
        <dbReference type="ChEBI" id="CHEBI:82748"/>
        <dbReference type="EC" id="2.1.1.199"/>
    </reaction>
</comment>
<comment type="subcellular location">
    <subcellularLocation>
        <location evidence="1">Cytoplasm</location>
    </subcellularLocation>
</comment>
<comment type="similarity">
    <text evidence="1">Belongs to the methyltransferase superfamily. RsmH family.</text>
</comment>
<evidence type="ECO:0000255" key="1">
    <source>
        <dbReference type="HAMAP-Rule" id="MF_01007"/>
    </source>
</evidence>
<sequence length="313" mass="34147">MGNEFQHRTVLLDEAVDALVTRPDGVYVDGTFGRGGHSRAVLARLGDAGRLIAFDKDPRAIETAESIEDARFEIVHDSFAAMKGALDARGVGRVSGVLLDLGVSSPQVDDPARGFSFRANGPLDMRMDPTRGESAAEWLARASVQELTEVIRDYGEERFAFQIAKAIVARRAESDRLGPLDSTGELAQIVGHVVKTREKGKDPATRTFQAIRIHVNQELADLQVVLEAALSLLEQGGRLVVISFHSLEDRIVKRFLQAHASAPAVDRRLPIRAADLPRPPLKLLGRMFPNDAEVAANPRARSAVMRIAERVAP</sequence>
<keyword id="KW-0963">Cytoplasm</keyword>
<keyword id="KW-0489">Methyltransferase</keyword>
<keyword id="KW-0698">rRNA processing</keyword>
<keyword id="KW-0949">S-adenosyl-L-methionine</keyword>
<keyword id="KW-0808">Transferase</keyword>
<name>RSMH_BURMS</name>
<reference key="1">
    <citation type="journal article" date="2010" name="Genome Biol. Evol.">
        <title>Continuing evolution of Burkholderia mallei through genome reduction and large-scale rearrangements.</title>
        <authorList>
            <person name="Losada L."/>
            <person name="Ronning C.M."/>
            <person name="DeShazer D."/>
            <person name="Woods D."/>
            <person name="Fedorova N."/>
            <person name="Kim H.S."/>
            <person name="Shabalina S.A."/>
            <person name="Pearson T.R."/>
            <person name="Brinkac L."/>
            <person name="Tan P."/>
            <person name="Nandi T."/>
            <person name="Crabtree J."/>
            <person name="Badger J."/>
            <person name="Beckstrom-Sternberg S."/>
            <person name="Saqib M."/>
            <person name="Schutzer S.E."/>
            <person name="Keim P."/>
            <person name="Nierman W.C."/>
        </authorList>
    </citation>
    <scope>NUCLEOTIDE SEQUENCE [LARGE SCALE GENOMIC DNA]</scope>
    <source>
        <strain>SAVP1</strain>
    </source>
</reference>
<feature type="chain" id="PRO_0000386774" description="Ribosomal RNA small subunit methyltransferase H">
    <location>
        <begin position="1"/>
        <end position="313"/>
    </location>
</feature>
<feature type="binding site" evidence="1">
    <location>
        <begin position="35"/>
        <end position="37"/>
    </location>
    <ligand>
        <name>S-adenosyl-L-methionine</name>
        <dbReference type="ChEBI" id="CHEBI:59789"/>
    </ligand>
</feature>
<feature type="binding site" evidence="1">
    <location>
        <position position="55"/>
    </location>
    <ligand>
        <name>S-adenosyl-L-methionine</name>
        <dbReference type="ChEBI" id="CHEBI:59789"/>
    </ligand>
</feature>
<feature type="binding site" evidence="1">
    <location>
        <position position="79"/>
    </location>
    <ligand>
        <name>S-adenosyl-L-methionine</name>
        <dbReference type="ChEBI" id="CHEBI:59789"/>
    </ligand>
</feature>
<feature type="binding site" evidence="1">
    <location>
        <position position="100"/>
    </location>
    <ligand>
        <name>S-adenosyl-L-methionine</name>
        <dbReference type="ChEBI" id="CHEBI:59789"/>
    </ligand>
</feature>
<feature type="binding site" evidence="1">
    <location>
        <position position="107"/>
    </location>
    <ligand>
        <name>S-adenosyl-L-methionine</name>
        <dbReference type="ChEBI" id="CHEBI:59789"/>
    </ligand>
</feature>
<accession>A1V0S6</accession>
<organism>
    <name type="scientific">Burkholderia mallei (strain SAVP1)</name>
    <dbReference type="NCBI Taxonomy" id="320388"/>
    <lineage>
        <taxon>Bacteria</taxon>
        <taxon>Pseudomonadati</taxon>
        <taxon>Pseudomonadota</taxon>
        <taxon>Betaproteobacteria</taxon>
        <taxon>Burkholderiales</taxon>
        <taxon>Burkholderiaceae</taxon>
        <taxon>Burkholderia</taxon>
        <taxon>pseudomallei group</taxon>
    </lineage>
</organism>
<protein>
    <recommendedName>
        <fullName evidence="1">Ribosomal RNA small subunit methyltransferase H</fullName>
        <ecNumber evidence="1">2.1.1.199</ecNumber>
    </recommendedName>
    <alternativeName>
        <fullName evidence="1">16S rRNA m(4)C1402 methyltransferase</fullName>
    </alternativeName>
    <alternativeName>
        <fullName evidence="1">rRNA (cytosine-N(4)-)-methyltransferase RsmH</fullName>
    </alternativeName>
</protein>
<proteinExistence type="inferred from homology"/>
<gene>
    <name evidence="1" type="primary">rsmH</name>
    <name type="synonym">mraW</name>
    <name type="ordered locus">BMASAVP1_A0480</name>
</gene>